<protein>
    <recommendedName>
        <fullName evidence="1">Glutamate--cysteine ligase</fullName>
        <ecNumber evidence="1">6.3.2.2</ecNumber>
    </recommendedName>
    <alternativeName>
        <fullName evidence="1">Gamma-ECS</fullName>
        <shortName evidence="1">GCS</shortName>
    </alternativeName>
    <alternativeName>
        <fullName evidence="1">Gamma-glutamylcysteine synthetase</fullName>
    </alternativeName>
</protein>
<keyword id="KW-0067">ATP-binding</keyword>
<keyword id="KW-0317">Glutathione biosynthesis</keyword>
<keyword id="KW-0436">Ligase</keyword>
<keyword id="KW-0547">Nucleotide-binding</keyword>
<keyword id="KW-1185">Reference proteome</keyword>
<dbReference type="EC" id="6.3.2.2" evidence="1"/>
<dbReference type="EMBL" id="CP000851">
    <property type="protein sequence ID" value="ABV86535.1"/>
    <property type="molecule type" value="Genomic_DNA"/>
</dbReference>
<dbReference type="RefSeq" id="WP_012154461.1">
    <property type="nucleotide sequence ID" value="NC_009901.1"/>
</dbReference>
<dbReference type="SMR" id="A8H1U8"/>
<dbReference type="STRING" id="398579.Spea_1208"/>
<dbReference type="KEGG" id="spl:Spea_1208"/>
<dbReference type="eggNOG" id="COG2918">
    <property type="taxonomic scope" value="Bacteria"/>
</dbReference>
<dbReference type="HOGENOM" id="CLU_020728_3_0_6"/>
<dbReference type="OrthoDB" id="9803907at2"/>
<dbReference type="UniPathway" id="UPA00142">
    <property type="reaction ID" value="UER00209"/>
</dbReference>
<dbReference type="Proteomes" id="UP000002608">
    <property type="component" value="Chromosome"/>
</dbReference>
<dbReference type="GO" id="GO:0005829">
    <property type="term" value="C:cytosol"/>
    <property type="evidence" value="ECO:0007669"/>
    <property type="project" value="TreeGrafter"/>
</dbReference>
<dbReference type="GO" id="GO:0005524">
    <property type="term" value="F:ATP binding"/>
    <property type="evidence" value="ECO:0007669"/>
    <property type="project" value="UniProtKB-KW"/>
</dbReference>
<dbReference type="GO" id="GO:0004357">
    <property type="term" value="F:glutamate-cysteine ligase activity"/>
    <property type="evidence" value="ECO:0007669"/>
    <property type="project" value="UniProtKB-UniRule"/>
</dbReference>
<dbReference type="GO" id="GO:0046872">
    <property type="term" value="F:metal ion binding"/>
    <property type="evidence" value="ECO:0007669"/>
    <property type="project" value="TreeGrafter"/>
</dbReference>
<dbReference type="GO" id="GO:0006750">
    <property type="term" value="P:glutathione biosynthetic process"/>
    <property type="evidence" value="ECO:0007669"/>
    <property type="project" value="UniProtKB-UniRule"/>
</dbReference>
<dbReference type="Gene3D" id="3.30.590.20">
    <property type="match status" value="1"/>
</dbReference>
<dbReference type="HAMAP" id="MF_00578">
    <property type="entry name" value="Glu_cys_ligase"/>
    <property type="match status" value="1"/>
</dbReference>
<dbReference type="InterPro" id="IPR014746">
    <property type="entry name" value="Gln_synth/guanido_kin_cat_dom"/>
</dbReference>
<dbReference type="InterPro" id="IPR007370">
    <property type="entry name" value="Glu_cys_ligase"/>
</dbReference>
<dbReference type="InterPro" id="IPR006334">
    <property type="entry name" value="Glut_cys_ligase"/>
</dbReference>
<dbReference type="NCBIfam" id="TIGR01434">
    <property type="entry name" value="glu_cys_ligase"/>
    <property type="match status" value="1"/>
</dbReference>
<dbReference type="PANTHER" id="PTHR38761">
    <property type="entry name" value="GLUTAMATE--CYSTEINE LIGASE"/>
    <property type="match status" value="1"/>
</dbReference>
<dbReference type="PANTHER" id="PTHR38761:SF1">
    <property type="entry name" value="GLUTAMATE--CYSTEINE LIGASE"/>
    <property type="match status" value="1"/>
</dbReference>
<dbReference type="Pfam" id="PF04262">
    <property type="entry name" value="Glu_cys_ligase"/>
    <property type="match status" value="1"/>
</dbReference>
<dbReference type="SUPFAM" id="SSF55931">
    <property type="entry name" value="Glutamine synthetase/guanido kinase"/>
    <property type="match status" value="1"/>
</dbReference>
<sequence>MKSFNELVGKLSDPASRQALKSMQRGIEREALRIEKSGHLALDKHPKALGSALTHSRITTDYSESLLEFITPVFADIDELVEDLTLTHAYSVRHLNGQRLWPVSMPCYLGDGADIPIADYGSSNSGQMKSLYRKGLTYRYGAQMQIISGVHFNFSVSDKLWHRLYELSDKSLSLDDFISDSYFGLIRNYRRLVWVLPYLFGASPALCSTFIQDPKTSNFPFEVIGDGTLFMPYATSLRMSDLGYTNQEQDNLNISYNSLTDYLTGMQAAINMPSANFAKIGVKVDGEYRQLNDNILQIENEFYSPIRAKRVAKGSEKPSESLARAGVEYIEVRALDVNPYSAVGIEKSQIRFLDLFLLNCLLQPSAPSDATEEAEIAENLQAVVLEGRKPGLLLKRSGQELSLTHWLESLFGNLKQIAQLLDDEGQDDYQVALAKWHKAVENPNETLSGKIMAGLKDEQVDHSEWVMELAEQYHQQLKAYPLTENVDKRYQQDAVESLEKQAYLESQPSVSFDQFLVDYFKV</sequence>
<gene>
    <name evidence="1" type="primary">gshA</name>
    <name type="ordered locus">Spea_1208</name>
</gene>
<comment type="catalytic activity">
    <reaction evidence="1">
        <text>L-cysteine + L-glutamate + ATP = gamma-L-glutamyl-L-cysteine + ADP + phosphate + H(+)</text>
        <dbReference type="Rhea" id="RHEA:13285"/>
        <dbReference type="ChEBI" id="CHEBI:15378"/>
        <dbReference type="ChEBI" id="CHEBI:29985"/>
        <dbReference type="ChEBI" id="CHEBI:30616"/>
        <dbReference type="ChEBI" id="CHEBI:35235"/>
        <dbReference type="ChEBI" id="CHEBI:43474"/>
        <dbReference type="ChEBI" id="CHEBI:58173"/>
        <dbReference type="ChEBI" id="CHEBI:456216"/>
        <dbReference type="EC" id="6.3.2.2"/>
    </reaction>
</comment>
<comment type="pathway">
    <text evidence="1">Sulfur metabolism; glutathione biosynthesis; glutathione from L-cysteine and L-glutamate: step 1/2.</text>
</comment>
<comment type="similarity">
    <text evidence="1">Belongs to the glutamate--cysteine ligase type 1 family. Type 1 subfamily.</text>
</comment>
<organism>
    <name type="scientific">Shewanella pealeana (strain ATCC 700345 / ANG-SQ1)</name>
    <dbReference type="NCBI Taxonomy" id="398579"/>
    <lineage>
        <taxon>Bacteria</taxon>
        <taxon>Pseudomonadati</taxon>
        <taxon>Pseudomonadota</taxon>
        <taxon>Gammaproteobacteria</taxon>
        <taxon>Alteromonadales</taxon>
        <taxon>Shewanellaceae</taxon>
        <taxon>Shewanella</taxon>
    </lineage>
</organism>
<evidence type="ECO:0000255" key="1">
    <source>
        <dbReference type="HAMAP-Rule" id="MF_00578"/>
    </source>
</evidence>
<feature type="chain" id="PRO_1000082362" description="Glutamate--cysteine ligase">
    <location>
        <begin position="1"/>
        <end position="522"/>
    </location>
</feature>
<proteinExistence type="inferred from homology"/>
<reference key="1">
    <citation type="submission" date="2007-10" db="EMBL/GenBank/DDBJ databases">
        <title>Complete sequence of Shewanella pealeana ATCC 700345.</title>
        <authorList>
            <consortium name="US DOE Joint Genome Institute"/>
            <person name="Copeland A."/>
            <person name="Lucas S."/>
            <person name="Lapidus A."/>
            <person name="Barry K."/>
            <person name="Glavina del Rio T."/>
            <person name="Dalin E."/>
            <person name="Tice H."/>
            <person name="Pitluck S."/>
            <person name="Chertkov O."/>
            <person name="Brettin T."/>
            <person name="Bruce D."/>
            <person name="Detter J.C."/>
            <person name="Han C."/>
            <person name="Schmutz J."/>
            <person name="Larimer F."/>
            <person name="Land M."/>
            <person name="Hauser L."/>
            <person name="Kyrpides N."/>
            <person name="Kim E."/>
            <person name="Zhao J.-S.Z."/>
            <person name="Manno D."/>
            <person name="Hawari J."/>
            <person name="Richardson P."/>
        </authorList>
    </citation>
    <scope>NUCLEOTIDE SEQUENCE [LARGE SCALE GENOMIC DNA]</scope>
    <source>
        <strain>ATCC 700345 / ANG-SQ1</strain>
    </source>
</reference>
<name>GSH1_SHEPA</name>
<accession>A8H1U8</accession>